<comment type="function">
    <text evidence="4 6 7">Catalytic subunit of tRNA (adenine-N(1)-)-methyltransferase, which catalyzes the formation of N(1)-methyladenine at position 58 (m1A58) in initiator methionyl-tRNA (PubMed:16043508). Catalytic subunit of mRNA N(1)-methyltransferase complex, which mediates methylation of adenosine residues at the N(1) position of a small subset of mRNAs: N(1) methylation takes place in tRNA T-loop-like structures of mRNAs and is only present at low stoichiometries (PubMed:29072297, PubMed:29107537).</text>
</comment>
<comment type="catalytic activity">
    <reaction evidence="2 4">
        <text>adenosine(58) in tRNA + S-adenosyl-L-methionine = N(1)-methyladenosine(58) in tRNA + S-adenosyl-L-homocysteine + H(+)</text>
        <dbReference type="Rhea" id="RHEA:43152"/>
        <dbReference type="Rhea" id="RHEA-COMP:10365"/>
        <dbReference type="Rhea" id="RHEA-COMP:10366"/>
        <dbReference type="ChEBI" id="CHEBI:15378"/>
        <dbReference type="ChEBI" id="CHEBI:57856"/>
        <dbReference type="ChEBI" id="CHEBI:59789"/>
        <dbReference type="ChEBI" id="CHEBI:74411"/>
        <dbReference type="ChEBI" id="CHEBI:74491"/>
        <dbReference type="EC" id="2.1.1.220"/>
    </reaction>
</comment>
<comment type="catalytic activity">
    <reaction evidence="6 7">
        <text>an adenosine in mRNA + S-adenosyl-L-methionine = an N(1)-methyladenosine in mRNA + S-adenosyl-L-homocysteine + H(+)</text>
        <dbReference type="Rhea" id="RHEA:55392"/>
        <dbReference type="Rhea" id="RHEA-COMP:12414"/>
        <dbReference type="Rhea" id="RHEA-COMP:12415"/>
        <dbReference type="ChEBI" id="CHEBI:15378"/>
        <dbReference type="ChEBI" id="CHEBI:57856"/>
        <dbReference type="ChEBI" id="CHEBI:59789"/>
        <dbReference type="ChEBI" id="CHEBI:74411"/>
        <dbReference type="ChEBI" id="CHEBI:74491"/>
    </reaction>
</comment>
<comment type="subunit">
    <text evidence="5 10">Heterotetramer; composed of two copies of TRMT6 and two copies of TRMT61A.</text>
</comment>
<comment type="interaction">
    <interactant intactId="EBI-934042">
        <id>Q96FX7</id>
    </interactant>
    <interactant intactId="EBI-749995">
        <id>P56279</id>
        <label>TCL1A</label>
    </interactant>
    <organismsDiffer>false</organismsDiffer>
    <experiments>3</experiments>
</comment>
<comment type="interaction">
    <interactant intactId="EBI-934042">
        <id>Q96FX7</id>
    </interactant>
    <interactant intactId="EBI-934061">
        <id>Q9UJA5</id>
        <label>TRMT6</label>
    </interactant>
    <organismsDiffer>false</organismsDiffer>
    <experiments>4</experiments>
</comment>
<comment type="subcellular location">
    <subcellularLocation>
        <location evidence="1">Nucleus</location>
    </subcellularLocation>
</comment>
<comment type="similarity">
    <text evidence="2">Belongs to the class I-like SAM-binding methyltransferase superfamily. TRM61 family.</text>
</comment>
<comment type="sequence caution" evidence="9">
    <conflict type="miscellaneous discrepancy">
        <sequence resource="EMBL-CDS" id="BAC05168"/>
    </conflict>
    <text>Probable cloning artifact.</text>
</comment>
<keyword id="KW-0002">3D-structure</keyword>
<keyword id="KW-0007">Acetylation</keyword>
<keyword id="KW-0489">Methyltransferase</keyword>
<keyword id="KW-0539">Nucleus</keyword>
<keyword id="KW-0597">Phosphoprotein</keyword>
<keyword id="KW-1267">Proteomics identification</keyword>
<keyword id="KW-1185">Reference proteome</keyword>
<keyword id="KW-0949">S-adenosyl-L-methionine</keyword>
<keyword id="KW-0808">Transferase</keyword>
<keyword id="KW-0819">tRNA processing</keyword>
<gene>
    <name type="primary">TRMT61A</name>
    <name type="synonym">C14orf172</name>
    <name type="synonym">TRM61</name>
</gene>
<reference key="1">
    <citation type="journal article" date="2003" name="Nature">
        <title>The DNA sequence and analysis of human chromosome 14.</title>
        <authorList>
            <person name="Heilig R."/>
            <person name="Eckenberg R."/>
            <person name="Petit J.-L."/>
            <person name="Fonknechten N."/>
            <person name="Da Silva C."/>
            <person name="Cattolico L."/>
            <person name="Levy M."/>
            <person name="Barbe V."/>
            <person name="De Berardinis V."/>
            <person name="Ureta-Vidal A."/>
            <person name="Pelletier E."/>
            <person name="Vico V."/>
            <person name="Anthouard V."/>
            <person name="Rowen L."/>
            <person name="Madan A."/>
            <person name="Qin S."/>
            <person name="Sun H."/>
            <person name="Du H."/>
            <person name="Pepin K."/>
            <person name="Artiguenave F."/>
            <person name="Robert C."/>
            <person name="Cruaud C."/>
            <person name="Bruels T."/>
            <person name="Jaillon O."/>
            <person name="Friedlander L."/>
            <person name="Samson G."/>
            <person name="Brottier P."/>
            <person name="Cure S."/>
            <person name="Segurens B."/>
            <person name="Aniere F."/>
            <person name="Samain S."/>
            <person name="Crespeau H."/>
            <person name="Abbasi N."/>
            <person name="Aiach N."/>
            <person name="Boscus D."/>
            <person name="Dickhoff R."/>
            <person name="Dors M."/>
            <person name="Dubois I."/>
            <person name="Friedman C."/>
            <person name="Gouyvenoux M."/>
            <person name="James R."/>
            <person name="Madan A."/>
            <person name="Mairey-Estrada B."/>
            <person name="Mangenot S."/>
            <person name="Martins N."/>
            <person name="Menard M."/>
            <person name="Oztas S."/>
            <person name="Ratcliffe A."/>
            <person name="Shaffer T."/>
            <person name="Trask B."/>
            <person name="Vacherie B."/>
            <person name="Bellemere C."/>
            <person name="Belser C."/>
            <person name="Besnard-Gonnet M."/>
            <person name="Bartol-Mavel D."/>
            <person name="Boutard M."/>
            <person name="Briez-Silla S."/>
            <person name="Combette S."/>
            <person name="Dufosse-Laurent V."/>
            <person name="Ferron C."/>
            <person name="Lechaplais C."/>
            <person name="Louesse C."/>
            <person name="Muselet D."/>
            <person name="Magdelenat G."/>
            <person name="Pateau E."/>
            <person name="Petit E."/>
            <person name="Sirvain-Trukniewicz P."/>
            <person name="Trybou A."/>
            <person name="Vega-Czarny N."/>
            <person name="Bataille E."/>
            <person name="Bluet E."/>
            <person name="Bordelais I."/>
            <person name="Dubois M."/>
            <person name="Dumont C."/>
            <person name="Guerin T."/>
            <person name="Haffray S."/>
            <person name="Hammadi R."/>
            <person name="Muanga J."/>
            <person name="Pellouin V."/>
            <person name="Robert D."/>
            <person name="Wunderle E."/>
            <person name="Gauguet G."/>
            <person name="Roy A."/>
            <person name="Sainte-Marthe L."/>
            <person name="Verdier J."/>
            <person name="Verdier-Discala C."/>
            <person name="Hillier L.W."/>
            <person name="Fulton L."/>
            <person name="McPherson J."/>
            <person name="Matsuda F."/>
            <person name="Wilson R."/>
            <person name="Scarpelli C."/>
            <person name="Gyapay G."/>
            <person name="Wincker P."/>
            <person name="Saurin W."/>
            <person name="Quetier F."/>
            <person name="Waterston R."/>
            <person name="Hood L."/>
            <person name="Weissenbach J."/>
        </authorList>
    </citation>
    <scope>NUCLEOTIDE SEQUENCE [LARGE SCALE GENOMIC DNA]</scope>
</reference>
<reference key="2">
    <citation type="journal article" date="2004" name="Genome Res.">
        <title>The status, quality, and expansion of the NIH full-length cDNA project: the Mammalian Gene Collection (MGC).</title>
        <authorList>
            <consortium name="The MGC Project Team"/>
        </authorList>
    </citation>
    <scope>NUCLEOTIDE SEQUENCE [LARGE SCALE MRNA]</scope>
    <source>
        <tissue>Placenta</tissue>
    </source>
</reference>
<reference key="3">
    <citation type="journal article" date="2004" name="Nat. Genet.">
        <title>Complete sequencing and characterization of 21,243 full-length human cDNAs.</title>
        <authorList>
            <person name="Ota T."/>
            <person name="Suzuki Y."/>
            <person name="Nishikawa T."/>
            <person name="Otsuki T."/>
            <person name="Sugiyama T."/>
            <person name="Irie R."/>
            <person name="Wakamatsu A."/>
            <person name="Hayashi K."/>
            <person name="Sato H."/>
            <person name="Nagai K."/>
            <person name="Kimura K."/>
            <person name="Makita H."/>
            <person name="Sekine M."/>
            <person name="Obayashi M."/>
            <person name="Nishi T."/>
            <person name="Shibahara T."/>
            <person name="Tanaka T."/>
            <person name="Ishii S."/>
            <person name="Yamamoto J."/>
            <person name="Saito K."/>
            <person name="Kawai Y."/>
            <person name="Isono Y."/>
            <person name="Nakamura Y."/>
            <person name="Nagahari K."/>
            <person name="Murakami K."/>
            <person name="Yasuda T."/>
            <person name="Iwayanagi T."/>
            <person name="Wagatsuma M."/>
            <person name="Shiratori A."/>
            <person name="Sudo H."/>
            <person name="Hosoiri T."/>
            <person name="Kaku Y."/>
            <person name="Kodaira H."/>
            <person name="Kondo H."/>
            <person name="Sugawara M."/>
            <person name="Takahashi M."/>
            <person name="Kanda K."/>
            <person name="Yokoi T."/>
            <person name="Furuya T."/>
            <person name="Kikkawa E."/>
            <person name="Omura Y."/>
            <person name="Abe K."/>
            <person name="Kamihara K."/>
            <person name="Katsuta N."/>
            <person name="Sato K."/>
            <person name="Tanikawa M."/>
            <person name="Yamazaki M."/>
            <person name="Ninomiya K."/>
            <person name="Ishibashi T."/>
            <person name="Yamashita H."/>
            <person name="Murakawa K."/>
            <person name="Fujimori K."/>
            <person name="Tanai H."/>
            <person name="Kimata M."/>
            <person name="Watanabe M."/>
            <person name="Hiraoka S."/>
            <person name="Chiba Y."/>
            <person name="Ishida S."/>
            <person name="Ono Y."/>
            <person name="Takiguchi S."/>
            <person name="Watanabe S."/>
            <person name="Yosida M."/>
            <person name="Hotuta T."/>
            <person name="Kusano J."/>
            <person name="Kanehori K."/>
            <person name="Takahashi-Fujii A."/>
            <person name="Hara H."/>
            <person name="Tanase T.-O."/>
            <person name="Nomura Y."/>
            <person name="Togiya S."/>
            <person name="Komai F."/>
            <person name="Hara R."/>
            <person name="Takeuchi K."/>
            <person name="Arita M."/>
            <person name="Imose N."/>
            <person name="Musashino K."/>
            <person name="Yuuki H."/>
            <person name="Oshima A."/>
            <person name="Sasaki N."/>
            <person name="Aotsuka S."/>
            <person name="Yoshikawa Y."/>
            <person name="Matsunawa H."/>
            <person name="Ichihara T."/>
            <person name="Shiohata N."/>
            <person name="Sano S."/>
            <person name="Moriya S."/>
            <person name="Momiyama H."/>
            <person name="Satoh N."/>
            <person name="Takami S."/>
            <person name="Terashima Y."/>
            <person name="Suzuki O."/>
            <person name="Nakagawa S."/>
            <person name="Senoh A."/>
            <person name="Mizoguchi H."/>
            <person name="Goto Y."/>
            <person name="Shimizu F."/>
            <person name="Wakebe H."/>
            <person name="Hishigaki H."/>
            <person name="Watanabe T."/>
            <person name="Sugiyama A."/>
            <person name="Takemoto M."/>
            <person name="Kawakami B."/>
            <person name="Yamazaki M."/>
            <person name="Watanabe K."/>
            <person name="Kumagai A."/>
            <person name="Itakura S."/>
            <person name="Fukuzumi Y."/>
            <person name="Fujimori Y."/>
            <person name="Komiyama M."/>
            <person name="Tashiro H."/>
            <person name="Tanigami A."/>
            <person name="Fujiwara T."/>
            <person name="Ono T."/>
            <person name="Yamada K."/>
            <person name="Fujii Y."/>
            <person name="Ozaki K."/>
            <person name="Hirao M."/>
            <person name="Ohmori Y."/>
            <person name="Kawabata A."/>
            <person name="Hikiji T."/>
            <person name="Kobatake N."/>
            <person name="Inagaki H."/>
            <person name="Ikema Y."/>
            <person name="Okamoto S."/>
            <person name="Okitani R."/>
            <person name="Kawakami T."/>
            <person name="Noguchi S."/>
            <person name="Itoh T."/>
            <person name="Shigeta K."/>
            <person name="Senba T."/>
            <person name="Matsumura K."/>
            <person name="Nakajima Y."/>
            <person name="Mizuno T."/>
            <person name="Morinaga M."/>
            <person name="Sasaki M."/>
            <person name="Togashi T."/>
            <person name="Oyama M."/>
            <person name="Hata H."/>
            <person name="Watanabe M."/>
            <person name="Komatsu T."/>
            <person name="Mizushima-Sugano J."/>
            <person name="Satoh T."/>
            <person name="Shirai Y."/>
            <person name="Takahashi Y."/>
            <person name="Nakagawa K."/>
            <person name="Okumura K."/>
            <person name="Nagase T."/>
            <person name="Nomura N."/>
            <person name="Kikuchi H."/>
            <person name="Masuho Y."/>
            <person name="Yamashita R."/>
            <person name="Nakai K."/>
            <person name="Yada T."/>
            <person name="Nakamura Y."/>
            <person name="Ohara O."/>
            <person name="Isogai T."/>
            <person name="Sugano S."/>
        </authorList>
    </citation>
    <scope>NUCLEOTIDE SEQUENCE [LARGE SCALE MRNA] OF 1-282</scope>
    <source>
        <tissue>Testis</tissue>
    </source>
</reference>
<reference key="4">
    <citation type="journal article" date="2005" name="RNA">
        <title>The bipartite structure of the tRNA m1A58 methyltransferase from S. cerevisiae is conserved in humans.</title>
        <authorList>
            <person name="Ozanick S."/>
            <person name="Krecic A."/>
            <person name="Andersland J."/>
            <person name="Anderson J.T."/>
        </authorList>
    </citation>
    <scope>FUNCTION</scope>
    <scope>CATALYTIC ACTIVITY</scope>
    <scope>SUBUNIT</scope>
    <scope>VARIANT ALA-66</scope>
</reference>
<reference key="5">
    <citation type="journal article" date="2009" name="Sci. Signal.">
        <title>Quantitative phosphoproteomic analysis of T cell receptor signaling reveals system-wide modulation of protein-protein interactions.</title>
        <authorList>
            <person name="Mayya V."/>
            <person name="Lundgren D.H."/>
            <person name="Hwang S.-I."/>
            <person name="Rezaul K."/>
            <person name="Wu L."/>
            <person name="Eng J.K."/>
            <person name="Rodionov V."/>
            <person name="Han D.K."/>
        </authorList>
    </citation>
    <scope>PHOSPHORYLATION [LARGE SCALE ANALYSIS] AT SER-263</scope>
    <scope>IDENTIFICATION BY MASS SPECTROMETRY [LARGE SCALE ANALYSIS]</scope>
    <source>
        <tissue>Leukemic T-cell</tissue>
    </source>
</reference>
<reference key="6">
    <citation type="journal article" date="2011" name="BMC Syst. Biol.">
        <title>Initial characterization of the human central proteome.</title>
        <authorList>
            <person name="Burkard T.R."/>
            <person name="Planyavsky M."/>
            <person name="Kaupe I."/>
            <person name="Breitwieser F.P."/>
            <person name="Buerckstuemmer T."/>
            <person name="Bennett K.L."/>
            <person name="Superti-Furga G."/>
            <person name="Colinge J."/>
        </authorList>
    </citation>
    <scope>IDENTIFICATION BY MASS SPECTROMETRY [LARGE SCALE ANALYSIS]</scope>
</reference>
<reference key="7">
    <citation type="journal article" date="2012" name="Mol. Cell. Proteomics">
        <title>Comparative large-scale characterisation of plant vs. mammal proteins reveals similar and idiosyncratic N-alpha acetylation features.</title>
        <authorList>
            <person name="Bienvenut W.V."/>
            <person name="Sumpton D."/>
            <person name="Martinez A."/>
            <person name="Lilla S."/>
            <person name="Espagne C."/>
            <person name="Meinnel T."/>
            <person name="Giglione C."/>
        </authorList>
    </citation>
    <scope>ACETYLATION [LARGE SCALE ANALYSIS] AT SER-2</scope>
    <scope>CLEAVAGE OF INITIATOR METHIONINE [LARGE SCALE ANALYSIS]</scope>
    <scope>IDENTIFICATION BY MASS SPECTROMETRY [LARGE SCALE ANALYSIS]</scope>
</reference>
<reference key="8">
    <citation type="journal article" date="2017" name="Mol. Cell">
        <title>Base-resolution mapping reveals distinct m1A methylome in nuclear- and mitochondrial-encoded transcripts.</title>
        <authorList>
            <person name="Li X."/>
            <person name="Xiong X."/>
            <person name="Zhang M."/>
            <person name="Wang K."/>
            <person name="Chen Y."/>
            <person name="Zhou J."/>
            <person name="Mao Y."/>
            <person name="Lv J."/>
            <person name="Yi D."/>
            <person name="Chen X.W."/>
            <person name="Wang C."/>
            <person name="Qian S.B."/>
            <person name="Yi C."/>
        </authorList>
    </citation>
    <scope>FUNCTION</scope>
    <scope>CATALYTIC ACTIVITY</scope>
</reference>
<reference key="9">
    <citation type="journal article" date="2017" name="Nature">
        <title>The m(1)A landscape on cytosolic and mitochondrial mRNA at single-base resolution.</title>
        <authorList>
            <person name="Safra M."/>
            <person name="Sas-Chen A."/>
            <person name="Nir R."/>
            <person name="Winkler R."/>
            <person name="Nachshon A."/>
            <person name="Bar-Yaacov D."/>
            <person name="Erlacher M."/>
            <person name="Rossmanith W."/>
            <person name="Stern-Ginossar N."/>
            <person name="Schwartz S."/>
        </authorList>
    </citation>
    <scope>FUNCTION</scope>
    <scope>CATALYTIC ACTIVITY</scope>
</reference>
<reference key="10">
    <citation type="journal article" date="2015" name="J. Mol. Biol.">
        <title>Crystal structure of the human tRNA m(1)A58 methyltransferase-tRNA(3)(Lys) complex: refolding of substrate tRNA allows access to the methylation target.</title>
        <authorList>
            <person name="Finer-Moore J."/>
            <person name="Czudnochowski N."/>
            <person name="O'Connell J.D. III"/>
            <person name="Wang A.L."/>
            <person name="Stroud R.M."/>
        </authorList>
    </citation>
    <scope>X-RAY CRYSTALLOGRAPHY (2.00 ANGSTROMS) IN COMPLEX WITH TRMT6; S-ADENOSYL-L-METHIONINE AND TRNA SUBSTRATE</scope>
    <scope>SUBUNIT</scope>
</reference>
<accession>Q96FX7</accession>
<accession>A6NN78</accession>
<accession>Q8N7Q9</accession>
<proteinExistence type="evidence at protein level"/>
<evidence type="ECO:0000250" key="1">
    <source>
        <dbReference type="UniProtKB" id="P46959"/>
    </source>
</evidence>
<evidence type="ECO:0000255" key="2">
    <source>
        <dbReference type="PROSITE-ProRule" id="PRU00952"/>
    </source>
</evidence>
<evidence type="ECO:0000256" key="3">
    <source>
        <dbReference type="SAM" id="MobiDB-lite"/>
    </source>
</evidence>
<evidence type="ECO:0000269" key="4">
    <source>
    </source>
</evidence>
<evidence type="ECO:0000269" key="5">
    <source>
    </source>
</evidence>
<evidence type="ECO:0000269" key="6">
    <source>
    </source>
</evidence>
<evidence type="ECO:0000269" key="7">
    <source>
    </source>
</evidence>
<evidence type="ECO:0000303" key="8">
    <source>
    </source>
</evidence>
<evidence type="ECO:0000305" key="9"/>
<evidence type="ECO:0000305" key="10">
    <source>
    </source>
</evidence>
<evidence type="ECO:0007744" key="11">
    <source>
        <dbReference type="PDB" id="5CCB"/>
    </source>
</evidence>
<evidence type="ECO:0007744" key="12">
    <source>
        <dbReference type="PDB" id="5CCX"/>
    </source>
</evidence>
<evidence type="ECO:0007744" key="13">
    <source>
        <dbReference type="PDB" id="5CD1"/>
    </source>
</evidence>
<evidence type="ECO:0007744" key="14">
    <source>
    </source>
</evidence>
<evidence type="ECO:0007744" key="15">
    <source>
    </source>
</evidence>
<evidence type="ECO:0007829" key="16">
    <source>
        <dbReference type="PDB" id="5CCB"/>
    </source>
</evidence>
<protein>
    <recommendedName>
        <fullName>tRNA (adenine(58)-N(1))-methyltransferase catalytic subunit TRMT61A</fullName>
        <ecNumber evidence="4">2.1.1.220</ecNumber>
    </recommendedName>
    <alternativeName>
        <fullName evidence="8">mRNA methyladenosine-N(1)-methyltransferase catalytic subunit TRMT61A</fullName>
        <ecNumber evidence="6 7">2.1.1.-</ecNumber>
    </alternativeName>
    <alternativeName>
        <fullName>tRNA(m1A58)-methyltransferase subunit TRMT61A</fullName>
        <shortName>tRNA(m1A58)MTase subunit TRMT61A</shortName>
    </alternativeName>
</protein>
<sequence>MSFVAYEELIKEGDTAILSLGHGAMVAVRVQRGAQTQTRHGVLRHSVDLIGRPFGSKVTCGRGGWVYVLHPTPELWTLNLPHRTQILYSTDIALITMMLELRPGSVVCESGTGSGSVSHAIIRTIAPTGHLHTVEFHQQRAEKAREEFQEHRVGRWVTVRTQDVCRSGFGVSHVADAVFLDIPSPWEAVGHAWDALKVEGGRFCSFSPCIEQVQRTCQALAARGFSELSTLEVLPQVYNVRTVSLPPPDLGTGTDGPAGSDTSPFRSGTPMKEAVGHTGYLTFATKTPG</sequence>
<dbReference type="EC" id="2.1.1.220" evidence="4"/>
<dbReference type="EC" id="2.1.1.-" evidence="6 7"/>
<dbReference type="EMBL" id="AL133367">
    <property type="status" value="NOT_ANNOTATED_CDS"/>
    <property type="molecule type" value="Genomic_DNA"/>
</dbReference>
<dbReference type="EMBL" id="AL139300">
    <property type="status" value="NOT_ANNOTATED_CDS"/>
    <property type="molecule type" value="Genomic_DNA"/>
</dbReference>
<dbReference type="EMBL" id="BC010167">
    <property type="protein sequence ID" value="AAH10167.1"/>
    <property type="molecule type" value="mRNA"/>
</dbReference>
<dbReference type="EMBL" id="AK097771">
    <property type="protein sequence ID" value="BAC05168.1"/>
    <property type="status" value="ALT_SEQ"/>
    <property type="molecule type" value="mRNA"/>
</dbReference>
<dbReference type="CCDS" id="CCDS41994.1"/>
<dbReference type="RefSeq" id="NP_689520.2">
    <property type="nucleotide sequence ID" value="NM_152307.3"/>
</dbReference>
<dbReference type="PDB" id="5CCB">
    <property type="method" value="X-ray"/>
    <property type="resolution" value="2.00 A"/>
    <property type="chains" value="A=1-289"/>
</dbReference>
<dbReference type="PDB" id="5CCX">
    <property type="method" value="X-ray"/>
    <property type="resolution" value="2.10 A"/>
    <property type="chains" value="A=1-289"/>
</dbReference>
<dbReference type="PDB" id="5CD1">
    <property type="method" value="X-ray"/>
    <property type="resolution" value="3.60 A"/>
    <property type="chains" value="A/D=1-289"/>
</dbReference>
<dbReference type="PDBsum" id="5CCB"/>
<dbReference type="PDBsum" id="5CCX"/>
<dbReference type="PDBsum" id="5CD1"/>
<dbReference type="SMR" id="Q96FX7"/>
<dbReference type="BioGRID" id="125450">
    <property type="interactions" value="103"/>
</dbReference>
<dbReference type="ComplexPortal" id="CPX-6269">
    <property type="entry name" value="tRNA (adenine(58)-N(1))-methyltransferase complex"/>
</dbReference>
<dbReference type="FunCoup" id="Q96FX7">
    <property type="interactions" value="1227"/>
</dbReference>
<dbReference type="IntAct" id="Q96FX7">
    <property type="interactions" value="46"/>
</dbReference>
<dbReference type="MINT" id="Q96FX7"/>
<dbReference type="STRING" id="9606.ENSP00000374399"/>
<dbReference type="GlyGen" id="Q96FX7">
    <property type="glycosylation" value="1 site, 1 O-linked glycan (1 site)"/>
</dbReference>
<dbReference type="iPTMnet" id="Q96FX7"/>
<dbReference type="PhosphoSitePlus" id="Q96FX7"/>
<dbReference type="SwissPalm" id="Q96FX7"/>
<dbReference type="BioMuta" id="TRMT61A"/>
<dbReference type="DMDM" id="74760827"/>
<dbReference type="jPOST" id="Q96FX7"/>
<dbReference type="MassIVE" id="Q96FX7"/>
<dbReference type="PaxDb" id="9606-ENSP00000374399"/>
<dbReference type="PeptideAtlas" id="Q96FX7"/>
<dbReference type="ProteomicsDB" id="76570"/>
<dbReference type="Pumba" id="Q96FX7"/>
<dbReference type="Antibodypedia" id="6565">
    <property type="antibodies" value="77 antibodies from 22 providers"/>
</dbReference>
<dbReference type="DNASU" id="115708"/>
<dbReference type="Ensembl" id="ENST00000389749.9">
    <property type="protein sequence ID" value="ENSP00000374399.4"/>
    <property type="gene ID" value="ENSG00000166166.13"/>
</dbReference>
<dbReference type="GeneID" id="115708"/>
<dbReference type="KEGG" id="hsa:115708"/>
<dbReference type="MANE-Select" id="ENST00000389749.9">
    <property type="protein sequence ID" value="ENSP00000374399.4"/>
    <property type="RefSeq nucleotide sequence ID" value="NM_152307.3"/>
    <property type="RefSeq protein sequence ID" value="NP_689520.2"/>
</dbReference>
<dbReference type="UCSC" id="uc001yng.4">
    <property type="organism name" value="human"/>
</dbReference>
<dbReference type="AGR" id="HGNC:23790"/>
<dbReference type="CTD" id="115708"/>
<dbReference type="DisGeNET" id="115708"/>
<dbReference type="GeneCards" id="TRMT61A"/>
<dbReference type="HGNC" id="HGNC:23790">
    <property type="gene designation" value="TRMT61A"/>
</dbReference>
<dbReference type="HPA" id="ENSG00000166166">
    <property type="expression patterns" value="Low tissue specificity"/>
</dbReference>
<dbReference type="MIM" id="620885">
    <property type="type" value="gene"/>
</dbReference>
<dbReference type="neXtProt" id="NX_Q96FX7"/>
<dbReference type="OpenTargets" id="ENSG00000166166"/>
<dbReference type="PharmGKB" id="PA164726783"/>
<dbReference type="VEuPathDB" id="HostDB:ENSG00000166166"/>
<dbReference type="eggNOG" id="KOG2915">
    <property type="taxonomic scope" value="Eukaryota"/>
</dbReference>
<dbReference type="GeneTree" id="ENSGT00940000154239"/>
<dbReference type="HOGENOM" id="CLU_025402_4_1_1"/>
<dbReference type="InParanoid" id="Q96FX7"/>
<dbReference type="OMA" id="RPDHRMI"/>
<dbReference type="OrthoDB" id="1925287at2759"/>
<dbReference type="PAN-GO" id="Q96FX7">
    <property type="GO annotations" value="3 GO annotations based on evolutionary models"/>
</dbReference>
<dbReference type="PhylomeDB" id="Q96FX7"/>
<dbReference type="TreeFam" id="TF315053"/>
<dbReference type="BRENDA" id="2.1.1.220">
    <property type="organism ID" value="2681"/>
</dbReference>
<dbReference type="PathwayCommons" id="Q96FX7"/>
<dbReference type="Reactome" id="R-HSA-6782315">
    <property type="pathway name" value="tRNA modification in the nucleus and cytosol"/>
</dbReference>
<dbReference type="SignaLink" id="Q96FX7"/>
<dbReference type="BioGRID-ORCS" id="115708">
    <property type="hits" value="285 hits in 1160 CRISPR screens"/>
</dbReference>
<dbReference type="ChiTaRS" id="TRMT61A">
    <property type="organism name" value="human"/>
</dbReference>
<dbReference type="EvolutionaryTrace" id="Q96FX7"/>
<dbReference type="GenomeRNAi" id="115708"/>
<dbReference type="Pharos" id="Q96FX7">
    <property type="development level" value="Tbio"/>
</dbReference>
<dbReference type="PRO" id="PR:Q96FX7"/>
<dbReference type="Proteomes" id="UP000005640">
    <property type="component" value="Chromosome 14"/>
</dbReference>
<dbReference type="RNAct" id="Q96FX7">
    <property type="molecule type" value="protein"/>
</dbReference>
<dbReference type="Bgee" id="ENSG00000166166">
    <property type="expression patterns" value="Expressed in type B pancreatic cell and 204 other cell types or tissues"/>
</dbReference>
<dbReference type="ExpressionAtlas" id="Q96FX7">
    <property type="expression patterns" value="baseline and differential"/>
</dbReference>
<dbReference type="GO" id="GO:0005654">
    <property type="term" value="C:nucleoplasm"/>
    <property type="evidence" value="ECO:0000304"/>
    <property type="project" value="Reactome"/>
</dbReference>
<dbReference type="GO" id="GO:0005634">
    <property type="term" value="C:nucleus"/>
    <property type="evidence" value="ECO:0000318"/>
    <property type="project" value="GO_Central"/>
</dbReference>
<dbReference type="GO" id="GO:0031515">
    <property type="term" value="C:tRNA (m1A) methyltransferase complex"/>
    <property type="evidence" value="ECO:0000353"/>
    <property type="project" value="ComplexPortal"/>
</dbReference>
<dbReference type="GO" id="GO:0061953">
    <property type="term" value="F:mRNA (adenine-N1-)-methyltransferase activity"/>
    <property type="evidence" value="ECO:0000314"/>
    <property type="project" value="UniProtKB"/>
</dbReference>
<dbReference type="GO" id="GO:0160107">
    <property type="term" value="F:tRNA (adenine(58)-N1)-methyltransferase activity"/>
    <property type="evidence" value="ECO:0007669"/>
    <property type="project" value="UniProtKB-EC"/>
</dbReference>
<dbReference type="GO" id="GO:0006397">
    <property type="term" value="P:mRNA processing"/>
    <property type="evidence" value="ECO:0000314"/>
    <property type="project" value="UniProtKB"/>
</dbReference>
<dbReference type="GO" id="GO:0030488">
    <property type="term" value="P:tRNA methylation"/>
    <property type="evidence" value="ECO:0000318"/>
    <property type="project" value="GO_Central"/>
</dbReference>
<dbReference type="FunFam" id="3.10.330.20:FF:000002">
    <property type="entry name" value="tRNA (adenine(58)-N(1))-methyltransferase catalytic subunit TRMT61A"/>
    <property type="match status" value="1"/>
</dbReference>
<dbReference type="FunFam" id="3.40.50.150:FF:000097">
    <property type="entry name" value="tRNA (adenine(58)-N(1))-methyltransferase catalytic subunit TRMT61A"/>
    <property type="match status" value="1"/>
</dbReference>
<dbReference type="Gene3D" id="3.10.330.20">
    <property type="match status" value="1"/>
</dbReference>
<dbReference type="Gene3D" id="3.40.50.150">
    <property type="entry name" value="Vaccinia Virus protein VP39"/>
    <property type="match status" value="1"/>
</dbReference>
<dbReference type="InterPro" id="IPR029063">
    <property type="entry name" value="SAM-dependent_MTases_sf"/>
</dbReference>
<dbReference type="InterPro" id="IPR049470">
    <property type="entry name" value="TRM61_C"/>
</dbReference>
<dbReference type="InterPro" id="IPR014816">
    <property type="entry name" value="tRNA_MeTrfase_Gcd14"/>
</dbReference>
<dbReference type="PANTHER" id="PTHR12133">
    <property type="entry name" value="TRNA (ADENINE(58)-N(1))-METHYLTRANSFERASE"/>
    <property type="match status" value="1"/>
</dbReference>
<dbReference type="PANTHER" id="PTHR12133:SF2">
    <property type="entry name" value="TRNA (ADENINE(58)-N(1))-METHYLTRANSFERASE CATALYTIC SUBUNIT TRMT61A"/>
    <property type="match status" value="1"/>
</dbReference>
<dbReference type="Pfam" id="PF08704">
    <property type="entry name" value="GCD14"/>
    <property type="match status" value="1"/>
</dbReference>
<dbReference type="PIRSF" id="PIRSF017269">
    <property type="entry name" value="GCD14"/>
    <property type="match status" value="1"/>
</dbReference>
<dbReference type="SUPFAM" id="SSF53335">
    <property type="entry name" value="S-adenosyl-L-methionine-dependent methyltransferases"/>
    <property type="match status" value="1"/>
</dbReference>
<dbReference type="PROSITE" id="PS51620">
    <property type="entry name" value="SAM_TRM61"/>
    <property type="match status" value="1"/>
</dbReference>
<name>TRM61_HUMAN</name>
<feature type="initiator methionine" description="Removed" evidence="15">
    <location>
        <position position="1"/>
    </location>
</feature>
<feature type="chain" id="PRO_0000233094" description="tRNA (adenine(58)-N(1))-methyltransferase catalytic subunit TRMT61A">
    <location>
        <begin position="2"/>
        <end position="289"/>
    </location>
</feature>
<feature type="region of interest" description="Disordered" evidence="3">
    <location>
        <begin position="245"/>
        <end position="272"/>
    </location>
</feature>
<feature type="compositionally biased region" description="Low complexity" evidence="3">
    <location>
        <begin position="250"/>
        <end position="259"/>
    </location>
</feature>
<feature type="binding site" evidence="5 13">
    <location>
        <begin position="20"/>
        <end position="22"/>
    </location>
    <ligand>
        <name>substrate</name>
    </ligand>
</feature>
<feature type="binding site" evidence="5 13">
    <location>
        <begin position="35"/>
        <end position="42"/>
    </location>
    <ligand>
        <name>substrate</name>
    </ligand>
</feature>
<feature type="binding site" evidence="5 13">
    <location>
        <begin position="64"/>
        <end position="65"/>
    </location>
    <ligand>
        <name>substrate</name>
    </ligand>
</feature>
<feature type="binding site" evidence="5 13">
    <location>
        <begin position="85"/>
        <end position="89"/>
    </location>
    <ligand>
        <name>substrate</name>
    </ligand>
</feature>
<feature type="binding site" evidence="5 11 12 13">
    <location>
        <position position="87"/>
    </location>
    <ligand>
        <name>S-adenosyl-L-methionine</name>
        <dbReference type="ChEBI" id="CHEBI:59789"/>
    </ligand>
</feature>
<feature type="binding site" evidence="5 13">
    <location>
        <begin position="110"/>
        <end position="117"/>
    </location>
    <ligand>
        <name>substrate</name>
    </ligand>
</feature>
<feature type="binding site" evidence="5 11 12 13">
    <location>
        <begin position="114"/>
        <end position="116"/>
    </location>
    <ligand>
        <name>S-adenosyl-L-methionine</name>
        <dbReference type="ChEBI" id="CHEBI:59789"/>
    </ligand>
</feature>
<feature type="binding site" evidence="2 5 11 12 13">
    <location>
        <position position="135"/>
    </location>
    <ligand>
        <name>S-adenosyl-L-methionine</name>
        <dbReference type="ChEBI" id="CHEBI:59789"/>
    </ligand>
</feature>
<feature type="binding site" evidence="5 11 12 13">
    <location>
        <position position="140"/>
    </location>
    <ligand>
        <name>S-adenosyl-L-methionine</name>
        <dbReference type="ChEBI" id="CHEBI:59789"/>
    </ligand>
</feature>
<feature type="binding site" evidence="5 11 12 13">
    <location>
        <begin position="163"/>
        <end position="164"/>
    </location>
    <ligand>
        <name>S-adenosyl-L-methionine</name>
        <dbReference type="ChEBI" id="CHEBI:59789"/>
    </ligand>
</feature>
<feature type="binding site" evidence="5 13">
    <location>
        <begin position="180"/>
        <end position="183"/>
    </location>
    <ligand>
        <name>substrate</name>
    </ligand>
</feature>
<feature type="binding site" evidence="2 5 11 12 13">
    <location>
        <position position="181"/>
    </location>
    <ligand>
        <name>S-adenosyl-L-methionine</name>
        <dbReference type="ChEBI" id="CHEBI:59789"/>
    </ligand>
</feature>
<feature type="binding site" evidence="5 13">
    <location>
        <begin position="205"/>
        <end position="212"/>
    </location>
    <ligand>
        <name>substrate</name>
    </ligand>
</feature>
<feature type="binding site" evidence="5 13">
    <location>
        <position position="278"/>
    </location>
    <ligand>
        <name>substrate</name>
    </ligand>
</feature>
<feature type="modified residue" description="N-acetylserine" evidence="15">
    <location>
        <position position="2"/>
    </location>
</feature>
<feature type="modified residue" description="Phosphoserine" evidence="14">
    <location>
        <position position="263"/>
    </location>
</feature>
<feature type="sequence variant" id="VAR_026053" evidence="4">
    <original>V</original>
    <variation>A</variation>
    <location>
        <position position="66"/>
    </location>
</feature>
<feature type="strand" evidence="16">
    <location>
        <begin position="3"/>
        <end position="5"/>
    </location>
</feature>
<feature type="strand" evidence="16">
    <location>
        <begin position="15"/>
        <end position="19"/>
    </location>
</feature>
<feature type="strand" evidence="16">
    <location>
        <begin position="25"/>
        <end position="29"/>
    </location>
</feature>
<feature type="strand" evidence="16">
    <location>
        <begin position="35"/>
        <end position="38"/>
    </location>
</feature>
<feature type="strand" evidence="16">
    <location>
        <begin position="41"/>
        <end position="44"/>
    </location>
</feature>
<feature type="helix" evidence="16">
    <location>
        <begin position="45"/>
        <end position="48"/>
    </location>
</feature>
<feature type="turn" evidence="16">
    <location>
        <begin position="49"/>
        <end position="51"/>
    </location>
</feature>
<feature type="strand" evidence="16">
    <location>
        <begin position="57"/>
        <end position="59"/>
    </location>
</feature>
<feature type="strand" evidence="16">
    <location>
        <begin position="61"/>
        <end position="63"/>
    </location>
</feature>
<feature type="strand" evidence="16">
    <location>
        <begin position="65"/>
        <end position="69"/>
    </location>
</feature>
<feature type="helix" evidence="16">
    <location>
        <begin position="73"/>
        <end position="77"/>
    </location>
</feature>
<feature type="helix" evidence="16">
    <location>
        <begin position="89"/>
        <end position="98"/>
    </location>
</feature>
<feature type="strand" evidence="16">
    <location>
        <begin position="106"/>
        <end position="110"/>
    </location>
</feature>
<feature type="helix" evidence="16">
    <location>
        <begin position="116"/>
        <end position="125"/>
    </location>
</feature>
<feature type="turn" evidence="16">
    <location>
        <begin position="126"/>
        <end position="128"/>
    </location>
</feature>
<feature type="strand" evidence="16">
    <location>
        <begin position="130"/>
        <end position="134"/>
    </location>
</feature>
<feature type="helix" evidence="16">
    <location>
        <begin position="138"/>
        <end position="150"/>
    </location>
</feature>
<feature type="helix" evidence="16">
    <location>
        <begin position="154"/>
        <end position="156"/>
    </location>
</feature>
<feature type="strand" evidence="16">
    <location>
        <begin position="157"/>
        <end position="160"/>
    </location>
</feature>
<feature type="helix" evidence="16">
    <location>
        <begin position="164"/>
        <end position="167"/>
    </location>
</feature>
<feature type="strand" evidence="16">
    <location>
        <begin position="175"/>
        <end position="180"/>
    </location>
</feature>
<feature type="helix" evidence="16">
    <location>
        <begin position="185"/>
        <end position="188"/>
    </location>
</feature>
<feature type="helix" evidence="16">
    <location>
        <begin position="189"/>
        <end position="195"/>
    </location>
</feature>
<feature type="strand" evidence="16">
    <location>
        <begin position="201"/>
        <end position="209"/>
    </location>
</feature>
<feature type="helix" evidence="16">
    <location>
        <begin position="210"/>
        <end position="223"/>
    </location>
</feature>
<feature type="strand" evidence="16">
    <location>
        <begin position="226"/>
        <end position="243"/>
    </location>
</feature>
<feature type="strand" evidence="16">
    <location>
        <begin position="265"/>
        <end position="273"/>
    </location>
</feature>
<feature type="strand" evidence="16">
    <location>
        <begin position="280"/>
        <end position="286"/>
    </location>
</feature>
<organism>
    <name type="scientific">Homo sapiens</name>
    <name type="common">Human</name>
    <dbReference type="NCBI Taxonomy" id="9606"/>
    <lineage>
        <taxon>Eukaryota</taxon>
        <taxon>Metazoa</taxon>
        <taxon>Chordata</taxon>
        <taxon>Craniata</taxon>
        <taxon>Vertebrata</taxon>
        <taxon>Euteleostomi</taxon>
        <taxon>Mammalia</taxon>
        <taxon>Eutheria</taxon>
        <taxon>Euarchontoglires</taxon>
        <taxon>Primates</taxon>
        <taxon>Haplorrhini</taxon>
        <taxon>Catarrhini</taxon>
        <taxon>Hominidae</taxon>
        <taxon>Homo</taxon>
    </lineage>
</organism>